<sequence length="282" mass="31452">MSKPEEVVNHVPEDEGSDIEAGGLFEDPPDFYPPSPPPTTEHYTMKNGDDITLHLVGHSPLEAHTLWNGAVIISQYFEEHPEEVKDRTVLEIGAAAGLPSLVAAVLGAKKVVVTDFPDPDIVDVMWKNIRGCPMLAVDREEDRNIVADGYVWGGKEAPLLAHLGEQKEGEAGFDVLILADLLFRHSEHSKLVDTIQFTLKKKPGSKAFVVFTSYRPWLQHKDLAFFDLARERGFIVDKFLEVKTEKPLFENDPGDEEIRKTVTGWTVRWPTDDEKAAAKADA</sequence>
<gene>
    <name type="primary">nnt-1</name>
    <name evidence="1" type="synonym">efm7</name>
    <name type="ORF">B15B10.100</name>
    <name type="ORF">NCU04775</name>
</gene>
<comment type="function">
    <text evidence="1">S-adenosyl-L-methionine-dependent protein methyltransferase that trimethylates the N-terminal glycine 'Gly-2' of elongation factor 1-alpha, before also catalyzing the mono- and dimethylation of 'Lys-3'.</text>
</comment>
<comment type="subcellular location">
    <subcellularLocation>
        <location evidence="1">Cytoplasm</location>
    </subcellularLocation>
</comment>
<comment type="similarity">
    <text evidence="1">Belongs to the class I-like SAM-binding methyltransferase superfamily. EFM7 family.</text>
</comment>
<comment type="sequence caution" evidence="3">
    <conflict type="erroneous initiation">
        <sequence resource="EMBL-CDS" id="EAA30988"/>
    </conflict>
    <text>Extended N-terminus.</text>
</comment>
<keyword id="KW-0963">Cytoplasm</keyword>
<keyword id="KW-0489">Methyltransferase</keyword>
<keyword id="KW-1185">Reference proteome</keyword>
<keyword id="KW-0949">S-adenosyl-L-methionine</keyword>
<keyword id="KW-0808">Transferase</keyword>
<proteinExistence type="inferred from homology"/>
<dbReference type="EC" id="2.1.1.-" evidence="1"/>
<dbReference type="EMBL" id="BX897677">
    <property type="protein sequence ID" value="CAE85577.1"/>
    <property type="molecule type" value="Genomic_DNA"/>
</dbReference>
<dbReference type="EMBL" id="CM002241">
    <property type="protein sequence ID" value="EAA30988.2"/>
    <property type="status" value="ALT_INIT"/>
    <property type="molecule type" value="Genomic_DNA"/>
</dbReference>
<dbReference type="RefSeq" id="XP_960224.2">
    <property type="nucleotide sequence ID" value="XM_955131.2"/>
</dbReference>
<dbReference type="SMR" id="Q7S634"/>
<dbReference type="FunCoup" id="Q7S634">
    <property type="interactions" value="133"/>
</dbReference>
<dbReference type="STRING" id="367110.Q7S634"/>
<dbReference type="PaxDb" id="5141-EFNCRP00000004600"/>
<dbReference type="EnsemblFungi" id="EAA30988">
    <property type="protein sequence ID" value="EAA30988"/>
    <property type="gene ID" value="NCU04775"/>
</dbReference>
<dbReference type="GeneID" id="3876371"/>
<dbReference type="KEGG" id="ncr:NCU04775"/>
<dbReference type="HOGENOM" id="CLU_032409_0_0_1"/>
<dbReference type="InParanoid" id="Q7S634"/>
<dbReference type="OMA" id="VGHNPLW"/>
<dbReference type="OrthoDB" id="46564at2759"/>
<dbReference type="Proteomes" id="UP000001805">
    <property type="component" value="Chromosome 5, Linkage Group VI"/>
</dbReference>
<dbReference type="GO" id="GO:0005737">
    <property type="term" value="C:cytoplasm"/>
    <property type="evidence" value="ECO:0007669"/>
    <property type="project" value="UniProtKB-SubCell"/>
</dbReference>
<dbReference type="GO" id="GO:0071885">
    <property type="term" value="F:N-terminal protein N-methyltransferase activity"/>
    <property type="evidence" value="ECO:0007669"/>
    <property type="project" value="UniProtKB-UniRule"/>
</dbReference>
<dbReference type="GO" id="GO:0008276">
    <property type="term" value="F:protein methyltransferase activity"/>
    <property type="evidence" value="ECO:0000318"/>
    <property type="project" value="GO_Central"/>
</dbReference>
<dbReference type="GO" id="GO:0016279">
    <property type="term" value="F:protein-lysine N-methyltransferase activity"/>
    <property type="evidence" value="ECO:0007669"/>
    <property type="project" value="UniProtKB-UniRule"/>
</dbReference>
<dbReference type="GO" id="GO:0032259">
    <property type="term" value="P:methylation"/>
    <property type="evidence" value="ECO:0007669"/>
    <property type="project" value="UniProtKB-KW"/>
</dbReference>
<dbReference type="Gene3D" id="3.40.50.150">
    <property type="entry name" value="Vaccinia Virus protein VP39"/>
    <property type="match status" value="1"/>
</dbReference>
<dbReference type="HAMAP" id="MF_03223">
    <property type="entry name" value="Methyltr_EFM7"/>
    <property type="match status" value="1"/>
</dbReference>
<dbReference type="InterPro" id="IPR025784">
    <property type="entry name" value="EFM7"/>
</dbReference>
<dbReference type="InterPro" id="IPR019410">
    <property type="entry name" value="Methyltransf_16"/>
</dbReference>
<dbReference type="InterPro" id="IPR029063">
    <property type="entry name" value="SAM-dependent_MTases_sf"/>
</dbReference>
<dbReference type="PANTHER" id="PTHR14614">
    <property type="entry name" value="HEPATOCELLULAR CARCINOMA-ASSOCIATED ANTIGEN"/>
    <property type="match status" value="1"/>
</dbReference>
<dbReference type="PANTHER" id="PTHR14614:SF10">
    <property type="entry name" value="PROTEIN N-TERMINAL AND LYSINE N-METHYLTRANSFERASE EFM7"/>
    <property type="match status" value="1"/>
</dbReference>
<dbReference type="Pfam" id="PF10294">
    <property type="entry name" value="Methyltransf_16"/>
    <property type="match status" value="1"/>
</dbReference>
<dbReference type="SUPFAM" id="SSF53335">
    <property type="entry name" value="S-adenosyl-L-methionine-dependent methyltransferases"/>
    <property type="match status" value="1"/>
</dbReference>
<dbReference type="PROSITE" id="PS51560">
    <property type="entry name" value="SAM_MT_NNT1"/>
    <property type="match status" value="1"/>
</dbReference>
<name>EFM7_NEUCR</name>
<accession>Q7S634</accession>
<organism>
    <name type="scientific">Neurospora crassa (strain ATCC 24698 / 74-OR23-1A / CBS 708.71 / DSM 1257 / FGSC 987)</name>
    <dbReference type="NCBI Taxonomy" id="367110"/>
    <lineage>
        <taxon>Eukaryota</taxon>
        <taxon>Fungi</taxon>
        <taxon>Dikarya</taxon>
        <taxon>Ascomycota</taxon>
        <taxon>Pezizomycotina</taxon>
        <taxon>Sordariomycetes</taxon>
        <taxon>Sordariomycetidae</taxon>
        <taxon>Sordariales</taxon>
        <taxon>Sordariaceae</taxon>
        <taxon>Neurospora</taxon>
    </lineage>
</organism>
<feature type="chain" id="PRO_0000096898" description="Protein N-terminal and lysine N-methyltransferase efm7">
    <location>
        <begin position="1"/>
        <end position="282"/>
    </location>
</feature>
<feature type="region of interest" description="Disordered" evidence="2">
    <location>
        <begin position="1"/>
        <end position="32"/>
    </location>
</feature>
<feature type="compositionally biased region" description="Basic and acidic residues" evidence="2">
    <location>
        <begin position="1"/>
        <end position="13"/>
    </location>
</feature>
<feature type="binding site" evidence="1">
    <location>
        <position position="67"/>
    </location>
    <ligand>
        <name>S-adenosyl-L-methionine</name>
        <dbReference type="ChEBI" id="CHEBI:59789"/>
    </ligand>
</feature>
<feature type="binding site" evidence="1">
    <location>
        <begin position="93"/>
        <end position="95"/>
    </location>
    <ligand>
        <name>S-adenosyl-L-methionine</name>
        <dbReference type="ChEBI" id="CHEBI:59789"/>
    </ligand>
</feature>
<feature type="binding site" evidence="1">
    <location>
        <position position="115"/>
    </location>
    <ligand>
        <name>S-adenosyl-L-methionine</name>
        <dbReference type="ChEBI" id="CHEBI:59789"/>
    </ligand>
</feature>
<feature type="binding site" evidence="1">
    <location>
        <position position="152"/>
    </location>
    <ligand>
        <name>S-adenosyl-L-methionine</name>
        <dbReference type="ChEBI" id="CHEBI:59789"/>
    </ligand>
</feature>
<feature type="binding site" evidence="1">
    <location>
        <position position="179"/>
    </location>
    <ligand>
        <name>S-adenosyl-L-methionine</name>
        <dbReference type="ChEBI" id="CHEBI:59789"/>
    </ligand>
</feature>
<reference key="1">
    <citation type="journal article" date="2003" name="Nucleic Acids Res.">
        <title>What's in the genome of a filamentous fungus? Analysis of the Neurospora genome sequence.</title>
        <authorList>
            <person name="Mannhaupt G."/>
            <person name="Montrone C."/>
            <person name="Haase D."/>
            <person name="Mewes H.-W."/>
            <person name="Aign V."/>
            <person name="Hoheisel J.D."/>
            <person name="Fartmann B."/>
            <person name="Nyakatura G."/>
            <person name="Kempken F."/>
            <person name="Maier J."/>
            <person name="Schulte U."/>
        </authorList>
    </citation>
    <scope>NUCLEOTIDE SEQUENCE [LARGE SCALE GENOMIC DNA]</scope>
    <source>
        <strain>ATCC 24698 / 74-OR23-1A / CBS 708.71 / DSM 1257 / FGSC 987</strain>
    </source>
</reference>
<reference key="2">
    <citation type="journal article" date="2003" name="Nature">
        <title>The genome sequence of the filamentous fungus Neurospora crassa.</title>
        <authorList>
            <person name="Galagan J.E."/>
            <person name="Calvo S.E."/>
            <person name="Borkovich K.A."/>
            <person name="Selker E.U."/>
            <person name="Read N.D."/>
            <person name="Jaffe D.B."/>
            <person name="FitzHugh W."/>
            <person name="Ma L.-J."/>
            <person name="Smirnov S."/>
            <person name="Purcell S."/>
            <person name="Rehman B."/>
            <person name="Elkins T."/>
            <person name="Engels R."/>
            <person name="Wang S."/>
            <person name="Nielsen C.B."/>
            <person name="Butler J."/>
            <person name="Endrizzi M."/>
            <person name="Qui D."/>
            <person name="Ianakiev P."/>
            <person name="Bell-Pedersen D."/>
            <person name="Nelson M.A."/>
            <person name="Werner-Washburne M."/>
            <person name="Selitrennikoff C.P."/>
            <person name="Kinsey J.A."/>
            <person name="Braun E.L."/>
            <person name="Zelter A."/>
            <person name="Schulte U."/>
            <person name="Kothe G.O."/>
            <person name="Jedd G."/>
            <person name="Mewes H.-W."/>
            <person name="Staben C."/>
            <person name="Marcotte E."/>
            <person name="Greenberg D."/>
            <person name="Roy A."/>
            <person name="Foley K."/>
            <person name="Naylor J."/>
            <person name="Stange-Thomann N."/>
            <person name="Barrett R."/>
            <person name="Gnerre S."/>
            <person name="Kamal M."/>
            <person name="Kamvysselis M."/>
            <person name="Mauceli E.W."/>
            <person name="Bielke C."/>
            <person name="Rudd S."/>
            <person name="Frishman D."/>
            <person name="Krystofova S."/>
            <person name="Rasmussen C."/>
            <person name="Metzenberg R.L."/>
            <person name="Perkins D.D."/>
            <person name="Kroken S."/>
            <person name="Cogoni C."/>
            <person name="Macino G."/>
            <person name="Catcheside D.E.A."/>
            <person name="Li W."/>
            <person name="Pratt R.J."/>
            <person name="Osmani S.A."/>
            <person name="DeSouza C.P.C."/>
            <person name="Glass N.L."/>
            <person name="Orbach M.J."/>
            <person name="Berglund J.A."/>
            <person name="Voelker R."/>
            <person name="Yarden O."/>
            <person name="Plamann M."/>
            <person name="Seiler S."/>
            <person name="Dunlap J.C."/>
            <person name="Radford A."/>
            <person name="Aramayo R."/>
            <person name="Natvig D.O."/>
            <person name="Alex L.A."/>
            <person name="Mannhaupt G."/>
            <person name="Ebbole D.J."/>
            <person name="Freitag M."/>
            <person name="Paulsen I."/>
            <person name="Sachs M.S."/>
            <person name="Lander E.S."/>
            <person name="Nusbaum C."/>
            <person name="Birren B.W."/>
        </authorList>
    </citation>
    <scope>NUCLEOTIDE SEQUENCE [LARGE SCALE GENOMIC DNA]</scope>
    <source>
        <strain>ATCC 24698 / 74-OR23-1A / CBS 708.71 / DSM 1257 / FGSC 987</strain>
    </source>
</reference>
<protein>
    <recommendedName>
        <fullName evidence="1">Protein N-terminal and lysine N-methyltransferase efm7</fullName>
        <ecNumber evidence="1">2.1.1.-</ecNumber>
    </recommendedName>
    <alternativeName>
        <fullName evidence="1">Elongation factor methyltransferase 7</fullName>
    </alternativeName>
</protein>
<evidence type="ECO:0000255" key="1">
    <source>
        <dbReference type="HAMAP-Rule" id="MF_03223"/>
    </source>
</evidence>
<evidence type="ECO:0000256" key="2">
    <source>
        <dbReference type="SAM" id="MobiDB-lite"/>
    </source>
</evidence>
<evidence type="ECO:0000305" key="3"/>